<dbReference type="EMBL" id="AY145837">
    <property type="protein sequence ID" value="AAN10254.1"/>
    <property type="molecule type" value="mRNA"/>
</dbReference>
<dbReference type="EMBL" id="AL627188">
    <property type="status" value="NOT_ANNOTATED_CDS"/>
    <property type="molecule type" value="Genomic_DNA"/>
</dbReference>
<dbReference type="CCDS" id="CCDS18469.1"/>
<dbReference type="RefSeq" id="NP_758500.2">
    <property type="nucleotide sequence ID" value="NM_172296.2"/>
</dbReference>
<dbReference type="RefSeq" id="XP_006503156.1">
    <property type="nucleotide sequence ID" value="XM_006503093.5"/>
</dbReference>
<dbReference type="RefSeq" id="XP_006503157.1">
    <property type="nucleotide sequence ID" value="XM_006503094.5"/>
</dbReference>
<dbReference type="SMR" id="A2A9A2"/>
<dbReference type="FunCoup" id="A2A9A2">
    <property type="interactions" value="1276"/>
</dbReference>
<dbReference type="STRING" id="10090.ENSMUSP00000060441"/>
<dbReference type="GlyGen" id="A2A9A2">
    <property type="glycosylation" value="2 sites"/>
</dbReference>
<dbReference type="iPTMnet" id="A2A9A2"/>
<dbReference type="PhosphoSitePlus" id="A2A9A2"/>
<dbReference type="PaxDb" id="10090-ENSMUSP00000060441"/>
<dbReference type="ProteomicsDB" id="279735"/>
<dbReference type="Antibodypedia" id="32925">
    <property type="antibodies" value="98 antibodies from 20 providers"/>
</dbReference>
<dbReference type="DNASU" id="242620"/>
<dbReference type="Ensembl" id="ENSMUST00000061187.4">
    <property type="protein sequence ID" value="ENSMUSP00000060441.4"/>
    <property type="gene ID" value="ENSMUSG00000047143.4"/>
</dbReference>
<dbReference type="GeneID" id="242620"/>
<dbReference type="KEGG" id="mmu:242620"/>
<dbReference type="UCSC" id="uc008ucv.1">
    <property type="organism name" value="mouse"/>
</dbReference>
<dbReference type="AGR" id="MGI:2653629"/>
<dbReference type="CTD" id="63950"/>
<dbReference type="MGI" id="MGI:2653629">
    <property type="gene designation" value="Dmrta2"/>
</dbReference>
<dbReference type="VEuPathDB" id="HostDB:ENSMUSG00000047143"/>
<dbReference type="eggNOG" id="KOG3815">
    <property type="taxonomic scope" value="Eukaryota"/>
</dbReference>
<dbReference type="GeneTree" id="ENSGT00940000161649"/>
<dbReference type="HOGENOM" id="CLU_038477_1_0_1"/>
<dbReference type="InParanoid" id="A2A9A2"/>
<dbReference type="OMA" id="LHKEQSY"/>
<dbReference type="OrthoDB" id="9942608at2759"/>
<dbReference type="PhylomeDB" id="A2A9A2"/>
<dbReference type="TreeFam" id="TF317837"/>
<dbReference type="BioGRID-ORCS" id="242620">
    <property type="hits" value="2 hits in 79 CRISPR screens"/>
</dbReference>
<dbReference type="PRO" id="PR:A2A9A2"/>
<dbReference type="Proteomes" id="UP000000589">
    <property type="component" value="Chromosome 4"/>
</dbReference>
<dbReference type="RNAct" id="A2A9A2">
    <property type="molecule type" value="protein"/>
</dbReference>
<dbReference type="Bgee" id="ENSMUSG00000047143">
    <property type="expression patterns" value="Expressed in floor plate of midbrain and 76 other cell types or tissues"/>
</dbReference>
<dbReference type="GO" id="GO:0005634">
    <property type="term" value="C:nucleus"/>
    <property type="evidence" value="ECO:0000314"/>
    <property type="project" value="MGI"/>
</dbReference>
<dbReference type="GO" id="GO:0042802">
    <property type="term" value="F:identical protein binding"/>
    <property type="evidence" value="ECO:0000353"/>
    <property type="project" value="MGI"/>
</dbReference>
<dbReference type="GO" id="GO:0046872">
    <property type="term" value="F:metal ion binding"/>
    <property type="evidence" value="ECO:0007669"/>
    <property type="project" value="UniProtKB-KW"/>
</dbReference>
<dbReference type="GO" id="GO:0043565">
    <property type="term" value="F:sequence-specific DNA binding"/>
    <property type="evidence" value="ECO:0000314"/>
    <property type="project" value="MGI"/>
</dbReference>
<dbReference type="GO" id="GO:1990837">
    <property type="term" value="F:sequence-specific double-stranded DNA binding"/>
    <property type="evidence" value="ECO:0007669"/>
    <property type="project" value="Ensembl"/>
</dbReference>
<dbReference type="GO" id="GO:0021796">
    <property type="term" value="P:cerebral cortex regionalization"/>
    <property type="evidence" value="ECO:0000315"/>
    <property type="project" value="MGI"/>
</dbReference>
<dbReference type="GO" id="GO:0071542">
    <property type="term" value="P:dopaminergic neuron differentiation"/>
    <property type="evidence" value="ECO:0000315"/>
    <property type="project" value="MGI"/>
</dbReference>
<dbReference type="GO" id="GO:0007405">
    <property type="term" value="P:neuroblast proliferation"/>
    <property type="evidence" value="ECO:0000315"/>
    <property type="project" value="MGI"/>
</dbReference>
<dbReference type="GO" id="GO:0048665">
    <property type="term" value="P:neuron fate specification"/>
    <property type="evidence" value="ECO:0000315"/>
    <property type="project" value="MGI"/>
</dbReference>
<dbReference type="GO" id="GO:0002052">
    <property type="term" value="P:positive regulation of neuroblast proliferation"/>
    <property type="evidence" value="ECO:0000315"/>
    <property type="project" value="MGI"/>
</dbReference>
<dbReference type="GO" id="GO:0006355">
    <property type="term" value="P:regulation of DNA-templated transcription"/>
    <property type="evidence" value="ECO:0007669"/>
    <property type="project" value="InterPro"/>
</dbReference>
<dbReference type="GO" id="GO:0035914">
    <property type="term" value="P:skeletal muscle cell differentiation"/>
    <property type="evidence" value="ECO:0000315"/>
    <property type="project" value="MGI"/>
</dbReference>
<dbReference type="GO" id="GO:0048863">
    <property type="term" value="P:stem cell differentiation"/>
    <property type="evidence" value="ECO:0000315"/>
    <property type="project" value="MGI"/>
</dbReference>
<dbReference type="GO" id="GO:0048866">
    <property type="term" value="P:stem cell fate specification"/>
    <property type="evidence" value="ECO:0000315"/>
    <property type="project" value="MGI"/>
</dbReference>
<dbReference type="CDD" id="cd14418">
    <property type="entry name" value="CUE_DMA_DMRTA2"/>
    <property type="match status" value="1"/>
</dbReference>
<dbReference type="FunFam" id="4.10.1040.10:FF:000001">
    <property type="entry name" value="doublesex- and mab-3-related transcription factor 1"/>
    <property type="match status" value="1"/>
</dbReference>
<dbReference type="Gene3D" id="4.10.1040.10">
    <property type="entry name" value="DM DNA-binding domain"/>
    <property type="match status" value="1"/>
</dbReference>
<dbReference type="InterPro" id="IPR001275">
    <property type="entry name" value="DM_DNA-bd"/>
</dbReference>
<dbReference type="InterPro" id="IPR036407">
    <property type="entry name" value="DM_DNA-bd_sf"/>
</dbReference>
<dbReference type="InterPro" id="IPR005173">
    <property type="entry name" value="DMA"/>
</dbReference>
<dbReference type="InterPro" id="IPR026607">
    <property type="entry name" value="DMRT"/>
</dbReference>
<dbReference type="InterPro" id="IPR046472">
    <property type="entry name" value="DMRT5_1_DMB_dom"/>
</dbReference>
<dbReference type="InterPro" id="IPR009060">
    <property type="entry name" value="UBA-like_sf"/>
</dbReference>
<dbReference type="PANTHER" id="PTHR12322">
    <property type="entry name" value="DOUBLESEX AND MAB-3 RELATED TRANSCRIPTION FACTOR DMRT"/>
    <property type="match status" value="1"/>
</dbReference>
<dbReference type="PANTHER" id="PTHR12322:SF76">
    <property type="entry name" value="DOUBLESEX- AND MAB-3-RELATED TRANSCRIPTION FACTOR A2"/>
    <property type="match status" value="1"/>
</dbReference>
<dbReference type="Pfam" id="PF00751">
    <property type="entry name" value="DM"/>
    <property type="match status" value="1"/>
</dbReference>
<dbReference type="Pfam" id="PF03474">
    <property type="entry name" value="DMA"/>
    <property type="match status" value="1"/>
</dbReference>
<dbReference type="Pfam" id="PF20624">
    <property type="entry name" value="DMRT5_DMB"/>
    <property type="match status" value="1"/>
</dbReference>
<dbReference type="SMART" id="SM00301">
    <property type="entry name" value="DM"/>
    <property type="match status" value="1"/>
</dbReference>
<dbReference type="SUPFAM" id="SSF82927">
    <property type="entry name" value="Cysteine-rich DNA binding domain, (DM domain)"/>
    <property type="match status" value="1"/>
</dbReference>
<dbReference type="SUPFAM" id="SSF46934">
    <property type="entry name" value="UBA-like"/>
    <property type="match status" value="1"/>
</dbReference>
<dbReference type="PROSITE" id="PS40000">
    <property type="entry name" value="DM_1"/>
    <property type="match status" value="1"/>
</dbReference>
<dbReference type="PROSITE" id="PS50809">
    <property type="entry name" value="DM_2"/>
    <property type="match status" value="1"/>
</dbReference>
<accession>A2A9A2</accession>
<accession>Q8CFF8</accession>
<proteinExistence type="evidence at transcript level"/>
<evidence type="ECO:0000255" key="1"/>
<evidence type="ECO:0000255" key="2">
    <source>
        <dbReference type="PROSITE-ProRule" id="PRU00070"/>
    </source>
</evidence>
<evidence type="ECO:0000256" key="3">
    <source>
        <dbReference type="SAM" id="MobiDB-lite"/>
    </source>
</evidence>
<evidence type="ECO:0000269" key="4">
    <source>
    </source>
</evidence>
<evidence type="ECO:0000305" key="5"/>
<sequence>MELRSELPSVPGAATAAATATGPPVASVASVAAAAAAAASLPVSVAGGLLRAPPLLLRAAEKYPRTPKCARCRNHGVVSALKGHKRYCRWKDCLCAKCTLIAERQRVMAAQVALRRQQAQEENEARELQLLYGTAEGLALAAANGIIPPRPAYEVFGSVCATDGGGPGAGAPAGSAGGAGGAEAKLQKFDLFPKTLLQAGRPDSPQPPPGKPLSPDGADSGPRTSSPEVRPGSGSENGDGESFSGSPLARASKEAGGSCPGSAGAGGGGEEDSPGSSSPLGSESGSEADKEEAEAAPTPGLGGGPGPRQRTPLDILTRVFPGHRRGVLELVLQGCGGDVVQAIEQVLNHHRGGLAAGLGPAAPLEKAAVSAAVEDAWPGRVEAAAAGGAGLPAPLQTGPTAPPHHRPLLAGAMTPGALGSLSSRSAFSPLQPNASHFGADAGAYPLGAPLGLSPLRLAYSAAAAHSRGLAFMAPYSTAGLVPTLGFRPPMDYAFSDLMRDRSAAAAAAVHKEPGYGGGLYGPMVNGTPEKQ</sequence>
<reference key="1">
    <citation type="journal article" date="2005" name="Science">
        <title>The transcriptional landscape of the mammalian genome.</title>
        <authorList>
            <person name="Carninci P."/>
            <person name="Kasukawa T."/>
            <person name="Katayama S."/>
            <person name="Gough J."/>
            <person name="Frith M.C."/>
            <person name="Maeda N."/>
            <person name="Oyama R."/>
            <person name="Ravasi T."/>
            <person name="Lenhard B."/>
            <person name="Wells C."/>
            <person name="Kodzius R."/>
            <person name="Shimokawa K."/>
            <person name="Bajic V.B."/>
            <person name="Brenner S.E."/>
            <person name="Batalov S."/>
            <person name="Forrest A.R."/>
            <person name="Zavolan M."/>
            <person name="Davis M.J."/>
            <person name="Wilming L.G."/>
            <person name="Aidinis V."/>
            <person name="Allen J.E."/>
            <person name="Ambesi-Impiombato A."/>
            <person name="Apweiler R."/>
            <person name="Aturaliya R.N."/>
            <person name="Bailey T.L."/>
            <person name="Bansal M."/>
            <person name="Baxter L."/>
            <person name="Beisel K.W."/>
            <person name="Bersano T."/>
            <person name="Bono H."/>
            <person name="Chalk A.M."/>
            <person name="Chiu K.P."/>
            <person name="Choudhary V."/>
            <person name="Christoffels A."/>
            <person name="Clutterbuck D.R."/>
            <person name="Crowe M.L."/>
            <person name="Dalla E."/>
            <person name="Dalrymple B.P."/>
            <person name="de Bono B."/>
            <person name="Della Gatta G."/>
            <person name="di Bernardo D."/>
            <person name="Down T."/>
            <person name="Engstrom P."/>
            <person name="Fagiolini M."/>
            <person name="Faulkner G."/>
            <person name="Fletcher C.F."/>
            <person name="Fukushima T."/>
            <person name="Furuno M."/>
            <person name="Futaki S."/>
            <person name="Gariboldi M."/>
            <person name="Georgii-Hemming P."/>
            <person name="Gingeras T.R."/>
            <person name="Gojobori T."/>
            <person name="Green R.E."/>
            <person name="Gustincich S."/>
            <person name="Harbers M."/>
            <person name="Hayashi Y."/>
            <person name="Hensch T.K."/>
            <person name="Hirokawa N."/>
            <person name="Hill D."/>
            <person name="Huminiecki L."/>
            <person name="Iacono M."/>
            <person name="Ikeo K."/>
            <person name="Iwama A."/>
            <person name="Ishikawa T."/>
            <person name="Jakt M."/>
            <person name="Kanapin A."/>
            <person name="Katoh M."/>
            <person name="Kawasawa Y."/>
            <person name="Kelso J."/>
            <person name="Kitamura H."/>
            <person name="Kitano H."/>
            <person name="Kollias G."/>
            <person name="Krishnan S.P."/>
            <person name="Kruger A."/>
            <person name="Kummerfeld S.K."/>
            <person name="Kurochkin I.V."/>
            <person name="Lareau L.F."/>
            <person name="Lazarevic D."/>
            <person name="Lipovich L."/>
            <person name="Liu J."/>
            <person name="Liuni S."/>
            <person name="McWilliam S."/>
            <person name="Madan Babu M."/>
            <person name="Madera M."/>
            <person name="Marchionni L."/>
            <person name="Matsuda H."/>
            <person name="Matsuzawa S."/>
            <person name="Miki H."/>
            <person name="Mignone F."/>
            <person name="Miyake S."/>
            <person name="Morris K."/>
            <person name="Mottagui-Tabar S."/>
            <person name="Mulder N."/>
            <person name="Nakano N."/>
            <person name="Nakauchi H."/>
            <person name="Ng P."/>
            <person name="Nilsson R."/>
            <person name="Nishiguchi S."/>
            <person name="Nishikawa S."/>
            <person name="Nori F."/>
            <person name="Ohara O."/>
            <person name="Okazaki Y."/>
            <person name="Orlando V."/>
            <person name="Pang K.C."/>
            <person name="Pavan W.J."/>
            <person name="Pavesi G."/>
            <person name="Pesole G."/>
            <person name="Petrovsky N."/>
            <person name="Piazza S."/>
            <person name="Reed J."/>
            <person name="Reid J.F."/>
            <person name="Ring B.Z."/>
            <person name="Ringwald M."/>
            <person name="Rost B."/>
            <person name="Ruan Y."/>
            <person name="Salzberg S.L."/>
            <person name="Sandelin A."/>
            <person name="Schneider C."/>
            <person name="Schoenbach C."/>
            <person name="Sekiguchi K."/>
            <person name="Semple C.A."/>
            <person name="Seno S."/>
            <person name="Sessa L."/>
            <person name="Sheng Y."/>
            <person name="Shibata Y."/>
            <person name="Shimada H."/>
            <person name="Shimada K."/>
            <person name="Silva D."/>
            <person name="Sinclair B."/>
            <person name="Sperling S."/>
            <person name="Stupka E."/>
            <person name="Sugiura K."/>
            <person name="Sultana R."/>
            <person name="Takenaka Y."/>
            <person name="Taki K."/>
            <person name="Tammoja K."/>
            <person name="Tan S.L."/>
            <person name="Tang S."/>
            <person name="Taylor M.S."/>
            <person name="Tegner J."/>
            <person name="Teichmann S.A."/>
            <person name="Ueda H.R."/>
            <person name="van Nimwegen E."/>
            <person name="Verardo R."/>
            <person name="Wei C.L."/>
            <person name="Yagi K."/>
            <person name="Yamanishi H."/>
            <person name="Zabarovsky E."/>
            <person name="Zhu S."/>
            <person name="Zimmer A."/>
            <person name="Hide W."/>
            <person name="Bult C."/>
            <person name="Grimmond S.M."/>
            <person name="Teasdale R.D."/>
            <person name="Liu E.T."/>
            <person name="Brusic V."/>
            <person name="Quackenbush J."/>
            <person name="Wahlestedt C."/>
            <person name="Mattick J.S."/>
            <person name="Hume D.A."/>
            <person name="Kai C."/>
            <person name="Sasaki D."/>
            <person name="Tomaru Y."/>
            <person name="Fukuda S."/>
            <person name="Kanamori-Katayama M."/>
            <person name="Suzuki M."/>
            <person name="Aoki J."/>
            <person name="Arakawa T."/>
            <person name="Iida J."/>
            <person name="Imamura K."/>
            <person name="Itoh M."/>
            <person name="Kato T."/>
            <person name="Kawaji H."/>
            <person name="Kawagashira N."/>
            <person name="Kawashima T."/>
            <person name="Kojima M."/>
            <person name="Kondo S."/>
            <person name="Konno H."/>
            <person name="Nakano K."/>
            <person name="Ninomiya N."/>
            <person name="Nishio T."/>
            <person name="Okada M."/>
            <person name="Plessy C."/>
            <person name="Shibata K."/>
            <person name="Shiraki T."/>
            <person name="Suzuki S."/>
            <person name="Tagami M."/>
            <person name="Waki K."/>
            <person name="Watahiki A."/>
            <person name="Okamura-Oho Y."/>
            <person name="Suzuki H."/>
            <person name="Kawai J."/>
            <person name="Hayashizaki Y."/>
        </authorList>
    </citation>
    <scope>NUCLEOTIDE SEQUENCE [LARGE SCALE MRNA]</scope>
    <source>
        <tissue>Embryo</tissue>
    </source>
</reference>
<reference key="2">
    <citation type="journal article" date="2009" name="PLoS Biol.">
        <title>Lineage-specific biology revealed by a finished genome assembly of the mouse.</title>
        <authorList>
            <person name="Church D.M."/>
            <person name="Goodstadt L."/>
            <person name="Hillier L.W."/>
            <person name="Zody M.C."/>
            <person name="Goldstein S."/>
            <person name="She X."/>
            <person name="Bult C.J."/>
            <person name="Agarwala R."/>
            <person name="Cherry J.L."/>
            <person name="DiCuccio M."/>
            <person name="Hlavina W."/>
            <person name="Kapustin Y."/>
            <person name="Meric P."/>
            <person name="Maglott D."/>
            <person name="Birtle Z."/>
            <person name="Marques A.C."/>
            <person name="Graves T."/>
            <person name="Zhou S."/>
            <person name="Teague B."/>
            <person name="Potamousis K."/>
            <person name="Churas C."/>
            <person name="Place M."/>
            <person name="Herschleb J."/>
            <person name="Runnheim R."/>
            <person name="Forrest D."/>
            <person name="Amos-Landgraf J."/>
            <person name="Schwartz D.C."/>
            <person name="Cheng Z."/>
            <person name="Lindblad-Toh K."/>
            <person name="Eichler E.E."/>
            <person name="Ponting C.P."/>
        </authorList>
    </citation>
    <scope>NUCLEOTIDE SEQUENCE [LARGE SCALE GENOMIC DNA]</scope>
    <source>
        <strain>C57BL/6J</strain>
    </source>
</reference>
<reference key="3">
    <citation type="journal article" date="2003" name="Gene Expr. Patterns">
        <title>Sexually dimorphic expression of multiple doublesex-related genes in the embryonic mouse gonad.</title>
        <authorList>
            <person name="Kim S."/>
            <person name="Kettlewell J.R."/>
            <person name="Anderson R.C."/>
            <person name="Bardwell V.J."/>
            <person name="Zarkower D."/>
        </authorList>
    </citation>
    <scope>TISSUE SPECIFICITY</scope>
    <scope>DEVELOPMENTAL STAGE</scope>
</reference>
<comment type="function">
    <text>May be involved in sexual development.</text>
</comment>
<comment type="subcellular location">
    <subcellularLocation>
        <location evidence="2">Nucleus</location>
    </subcellularLocation>
</comment>
<comment type="tissue specificity">
    <text evidence="4">Expressed in adult brain and testis, as well as in embryonic ovary, kidney, heart, lung, stomach and brain.</text>
</comment>
<comment type="developmental stage">
    <text evidence="4">Expressed from 12.5 dpc to 15.5 dpc in ovary and from 12.5 dpc to 14.5 dpc in testis, but to a lower extent. Expression is detectable in early embryos at 8.5 dpc and in brain of embryos at 13.5 dpc.</text>
</comment>
<comment type="similarity">
    <text evidence="5">Belongs to the DMRT family.</text>
</comment>
<keyword id="KW-0238">DNA-binding</keyword>
<keyword id="KW-0479">Metal-binding</keyword>
<keyword id="KW-0539">Nucleus</keyword>
<keyword id="KW-1185">Reference proteome</keyword>
<keyword id="KW-0862">Zinc</keyword>
<feature type="chain" id="PRO_0000333773" description="Doublesex- and mab-3-related transcription factor A2">
    <location>
        <begin position="1"/>
        <end position="531"/>
    </location>
</feature>
<feature type="domain" description="DMA" evidence="1">
    <location>
        <begin position="310"/>
        <end position="345"/>
    </location>
</feature>
<feature type="DNA-binding region" description="DM" evidence="2">
    <location>
        <begin position="69"/>
        <end position="116"/>
    </location>
</feature>
<feature type="region of interest" description="Disordered" evidence="3">
    <location>
        <begin position="197"/>
        <end position="312"/>
    </location>
</feature>
<feature type="compositionally biased region" description="Low complexity" evidence="3">
    <location>
        <begin position="274"/>
        <end position="285"/>
    </location>
</feature>
<feature type="sequence conflict" description="In Ref. 1; AAN10254." evidence="5" ref="1">
    <original>A</original>
    <variation>V</variation>
    <location>
        <position position="389"/>
    </location>
</feature>
<gene>
    <name type="primary">Dmrta2</name>
    <name type="synonym">Dmrt5</name>
</gene>
<name>DMTA2_MOUSE</name>
<protein>
    <recommendedName>
        <fullName>Doublesex- and mab-3-related transcription factor A2</fullName>
    </recommendedName>
    <alternativeName>
        <fullName>Doublesex- and mab-3-related transcription factor 5</fullName>
    </alternativeName>
</protein>
<organism>
    <name type="scientific">Mus musculus</name>
    <name type="common">Mouse</name>
    <dbReference type="NCBI Taxonomy" id="10090"/>
    <lineage>
        <taxon>Eukaryota</taxon>
        <taxon>Metazoa</taxon>
        <taxon>Chordata</taxon>
        <taxon>Craniata</taxon>
        <taxon>Vertebrata</taxon>
        <taxon>Euteleostomi</taxon>
        <taxon>Mammalia</taxon>
        <taxon>Eutheria</taxon>
        <taxon>Euarchontoglires</taxon>
        <taxon>Glires</taxon>
        <taxon>Rodentia</taxon>
        <taxon>Myomorpha</taxon>
        <taxon>Muroidea</taxon>
        <taxon>Muridae</taxon>
        <taxon>Murinae</taxon>
        <taxon>Mus</taxon>
        <taxon>Mus</taxon>
    </lineage>
</organism>